<proteinExistence type="inferred from homology"/>
<sequence length="163" mass="18342">MHKKYFIGTSILIAVFVVIFDQVTKYIIATTMKIGDSFEVIPHFLNITSHRNNGAAWGILSGKMTFFFIITIIILIALVYFFIKDAQYNLFMQVAISLLFAGALGNFIDRILTGEVVDFIDTNIFGYDFPIFNIADSSLTIGVILIIIALLKDTSNKKEKEVK</sequence>
<reference key="1">
    <citation type="submission" date="2007-05" db="EMBL/GenBank/DDBJ databases">
        <title>Complete sequence of chromosome of Staphylococcus aureus subsp. aureus JH9.</title>
        <authorList>
            <consortium name="US DOE Joint Genome Institute"/>
            <person name="Copeland A."/>
            <person name="Lucas S."/>
            <person name="Lapidus A."/>
            <person name="Barry K."/>
            <person name="Detter J.C."/>
            <person name="Glavina del Rio T."/>
            <person name="Hammon N."/>
            <person name="Israni S."/>
            <person name="Pitluck S."/>
            <person name="Chain P."/>
            <person name="Malfatti S."/>
            <person name="Shin M."/>
            <person name="Vergez L."/>
            <person name="Schmutz J."/>
            <person name="Larimer F."/>
            <person name="Land M."/>
            <person name="Hauser L."/>
            <person name="Kyrpides N."/>
            <person name="Kim E."/>
            <person name="Tomasz A."/>
            <person name="Richardson P."/>
        </authorList>
    </citation>
    <scope>NUCLEOTIDE SEQUENCE [LARGE SCALE GENOMIC DNA]</scope>
    <source>
        <strain>JH9</strain>
    </source>
</reference>
<dbReference type="EC" id="3.4.23.36" evidence="1"/>
<dbReference type="EMBL" id="CP000703">
    <property type="protein sequence ID" value="ABQ49054.1"/>
    <property type="molecule type" value="Genomic_DNA"/>
</dbReference>
<dbReference type="RefSeq" id="WP_000549207.1">
    <property type="nucleotide sequence ID" value="NC_009487.1"/>
</dbReference>
<dbReference type="SMR" id="A5IS81"/>
<dbReference type="KEGG" id="saj:SaurJH9_1255"/>
<dbReference type="HOGENOM" id="CLU_083252_3_0_9"/>
<dbReference type="UniPathway" id="UPA00665"/>
<dbReference type="GO" id="GO:0005886">
    <property type="term" value="C:plasma membrane"/>
    <property type="evidence" value="ECO:0007669"/>
    <property type="project" value="UniProtKB-SubCell"/>
</dbReference>
<dbReference type="GO" id="GO:0004190">
    <property type="term" value="F:aspartic-type endopeptidase activity"/>
    <property type="evidence" value="ECO:0007669"/>
    <property type="project" value="UniProtKB-UniRule"/>
</dbReference>
<dbReference type="GO" id="GO:0006508">
    <property type="term" value="P:proteolysis"/>
    <property type="evidence" value="ECO:0007669"/>
    <property type="project" value="UniProtKB-KW"/>
</dbReference>
<dbReference type="HAMAP" id="MF_00161">
    <property type="entry name" value="LspA"/>
    <property type="match status" value="1"/>
</dbReference>
<dbReference type="InterPro" id="IPR001872">
    <property type="entry name" value="Peptidase_A8"/>
</dbReference>
<dbReference type="NCBIfam" id="TIGR00077">
    <property type="entry name" value="lspA"/>
    <property type="match status" value="1"/>
</dbReference>
<dbReference type="PANTHER" id="PTHR33695">
    <property type="entry name" value="LIPOPROTEIN SIGNAL PEPTIDASE"/>
    <property type="match status" value="1"/>
</dbReference>
<dbReference type="PANTHER" id="PTHR33695:SF1">
    <property type="entry name" value="LIPOPROTEIN SIGNAL PEPTIDASE"/>
    <property type="match status" value="1"/>
</dbReference>
<dbReference type="Pfam" id="PF01252">
    <property type="entry name" value="Peptidase_A8"/>
    <property type="match status" value="1"/>
</dbReference>
<dbReference type="PRINTS" id="PR00781">
    <property type="entry name" value="LIPOSIGPTASE"/>
</dbReference>
<dbReference type="PROSITE" id="PS00855">
    <property type="entry name" value="SPASE_II"/>
    <property type="match status" value="1"/>
</dbReference>
<protein>
    <recommendedName>
        <fullName evidence="1">Lipoprotein signal peptidase</fullName>
        <ecNumber evidence="1">3.4.23.36</ecNumber>
    </recommendedName>
    <alternativeName>
        <fullName evidence="1">Prolipoprotein signal peptidase</fullName>
    </alternativeName>
    <alternativeName>
        <fullName evidence="1">Signal peptidase II</fullName>
        <shortName evidence="1">SPase II</shortName>
    </alternativeName>
</protein>
<evidence type="ECO:0000255" key="1">
    <source>
        <dbReference type="HAMAP-Rule" id="MF_00161"/>
    </source>
</evidence>
<accession>A5IS81</accession>
<organism>
    <name type="scientific">Staphylococcus aureus (strain JH9)</name>
    <dbReference type="NCBI Taxonomy" id="359786"/>
    <lineage>
        <taxon>Bacteria</taxon>
        <taxon>Bacillati</taxon>
        <taxon>Bacillota</taxon>
        <taxon>Bacilli</taxon>
        <taxon>Bacillales</taxon>
        <taxon>Staphylococcaceae</taxon>
        <taxon>Staphylococcus</taxon>
    </lineage>
</organism>
<name>LSPA_STAA9</name>
<keyword id="KW-0064">Aspartyl protease</keyword>
<keyword id="KW-1003">Cell membrane</keyword>
<keyword id="KW-0378">Hydrolase</keyword>
<keyword id="KW-0472">Membrane</keyword>
<keyword id="KW-0645">Protease</keyword>
<keyword id="KW-0812">Transmembrane</keyword>
<keyword id="KW-1133">Transmembrane helix</keyword>
<gene>
    <name evidence="1" type="primary">lspA</name>
    <name type="ordered locus">SaurJH9_1255</name>
</gene>
<comment type="function">
    <text evidence="1">This protein specifically catalyzes the removal of signal peptides from prolipoproteins.</text>
</comment>
<comment type="catalytic activity">
    <reaction evidence="1">
        <text>Release of signal peptides from bacterial membrane prolipoproteins. Hydrolyzes -Xaa-Yaa-Zaa-|-(S,diacylglyceryl)Cys-, in which Xaa is hydrophobic (preferably Leu), and Yaa (Ala or Ser) and Zaa (Gly or Ala) have small, neutral side chains.</text>
        <dbReference type="EC" id="3.4.23.36"/>
    </reaction>
</comment>
<comment type="pathway">
    <text evidence="1">Protein modification; lipoprotein biosynthesis (signal peptide cleavage).</text>
</comment>
<comment type="subcellular location">
    <subcellularLocation>
        <location evidence="1">Cell membrane</location>
        <topology evidence="1">Multi-pass membrane protein</topology>
    </subcellularLocation>
</comment>
<comment type="similarity">
    <text evidence="1">Belongs to the peptidase A8 family.</text>
</comment>
<feature type="chain" id="PRO_1000076935" description="Lipoprotein signal peptidase">
    <location>
        <begin position="1"/>
        <end position="163"/>
    </location>
</feature>
<feature type="transmembrane region" description="Helical" evidence="1">
    <location>
        <begin position="11"/>
        <end position="31"/>
    </location>
</feature>
<feature type="transmembrane region" description="Helical" evidence="1">
    <location>
        <begin position="63"/>
        <end position="83"/>
    </location>
</feature>
<feature type="transmembrane region" description="Helical" evidence="1">
    <location>
        <begin position="88"/>
        <end position="108"/>
    </location>
</feature>
<feature type="transmembrane region" description="Helical" evidence="1">
    <location>
        <begin position="131"/>
        <end position="151"/>
    </location>
</feature>
<feature type="active site" evidence="1">
    <location>
        <position position="118"/>
    </location>
</feature>
<feature type="active site" evidence="1">
    <location>
        <position position="136"/>
    </location>
</feature>